<proteinExistence type="evidence at protein level"/>
<feature type="signal peptide" evidence="2">
    <location>
        <begin position="1"/>
        <end position="20"/>
    </location>
</feature>
<feature type="propeptide" id="PRO_0000409894" evidence="1">
    <location>
        <begin position="21"/>
        <end position="40"/>
    </location>
</feature>
<feature type="chain" id="PRO_5000254111" description="Vestarin-D1 light chain">
    <location>
        <begin position="41"/>
        <end position="181"/>
    </location>
</feature>
<feature type="propeptide" id="PRO_0000409895" description="Activation peptide" evidence="1">
    <location>
        <begin position="182"/>
        <end position="228"/>
    </location>
</feature>
<feature type="chain" id="PRO_0000409896" description="Vestarin-D1 heavy chain">
    <location>
        <begin position="229"/>
        <end position="473"/>
    </location>
</feature>
<feature type="domain" description="Gla" evidence="5">
    <location>
        <begin position="41"/>
        <end position="86"/>
    </location>
</feature>
<feature type="domain" description="EGF-like 1; calcium-binding" evidence="3">
    <location>
        <begin position="86"/>
        <end position="122"/>
    </location>
</feature>
<feature type="domain" description="EGF-like 2" evidence="3">
    <location>
        <begin position="129"/>
        <end position="164"/>
    </location>
</feature>
<feature type="domain" description="Peptidase S1" evidence="4">
    <location>
        <begin position="229"/>
        <end position="460"/>
    </location>
</feature>
<feature type="active site" description="Charge relay system" evidence="1">
    <location>
        <position position="270"/>
    </location>
</feature>
<feature type="active site" description="Charge relay system" evidence="1">
    <location>
        <position position="315"/>
    </location>
</feature>
<feature type="active site" description="Charge relay system" evidence="1">
    <location>
        <position position="412"/>
    </location>
</feature>
<feature type="modified residue" description="4-carboxyglutamate" evidence="5">
    <location>
        <position position="46"/>
    </location>
</feature>
<feature type="modified residue" description="4-carboxyglutamate" evidence="5">
    <location>
        <position position="47"/>
    </location>
</feature>
<feature type="modified residue" description="4-carboxyglutamate" evidence="5">
    <location>
        <position position="54"/>
    </location>
</feature>
<feature type="modified residue" description="4-carboxyglutamate" evidence="5">
    <location>
        <position position="56"/>
    </location>
</feature>
<feature type="modified residue" description="4-carboxyglutamate" evidence="5">
    <location>
        <position position="59"/>
    </location>
</feature>
<feature type="modified residue" description="4-carboxyglutamate" evidence="5">
    <location>
        <position position="60"/>
    </location>
</feature>
<feature type="modified residue" description="4-carboxyglutamate" evidence="5">
    <location>
        <position position="65"/>
    </location>
</feature>
<feature type="modified residue" description="4-carboxyglutamate" evidence="5">
    <location>
        <position position="66"/>
    </location>
</feature>
<feature type="modified residue" description="4-carboxyglutamate" evidence="5">
    <location>
        <position position="69"/>
    </location>
</feature>
<feature type="modified residue" description="4-carboxyglutamate" evidence="5">
    <location>
        <position position="72"/>
    </location>
</feature>
<feature type="modified residue" description="4-carboxyglutamate" evidence="5">
    <location>
        <position position="75"/>
    </location>
</feature>
<feature type="glycosylation site" description="O-linked (Hex...) serine" evidence="1">
    <location>
        <position position="92"/>
    </location>
</feature>
<feature type="glycosylation site" description="N-linked (GlcNAc...) asparagine" evidence="2">
    <location>
        <position position="273"/>
    </location>
</feature>
<feature type="disulfide bond" evidence="1">
    <location>
        <begin position="57"/>
        <end position="62"/>
    </location>
</feature>
<feature type="disulfide bond" evidence="1">
    <location>
        <begin position="90"/>
        <end position="101"/>
    </location>
</feature>
<feature type="disulfide bond" evidence="1">
    <location>
        <begin position="95"/>
        <end position="110"/>
    </location>
</feature>
<feature type="disulfide bond" evidence="1">
    <location>
        <begin position="112"/>
        <end position="121"/>
    </location>
</feature>
<feature type="disulfide bond" evidence="1">
    <location>
        <begin position="129"/>
        <end position="140"/>
    </location>
</feature>
<feature type="disulfide bond" evidence="1">
    <location>
        <begin position="136"/>
        <end position="149"/>
    </location>
</feature>
<feature type="disulfide bond" evidence="1">
    <location>
        <begin position="151"/>
        <end position="164"/>
    </location>
</feature>
<feature type="disulfide bond" description="Interchain (between light and heavy chains)" evidence="3 4 5">
    <location>
        <begin position="172"/>
        <end position="335"/>
    </location>
</feature>
<feature type="disulfide bond" evidence="1">
    <location>
        <begin position="235"/>
        <end position="240"/>
    </location>
</feature>
<feature type="disulfide bond" evidence="1">
    <location>
        <begin position="383"/>
        <end position="397"/>
    </location>
</feature>
<feature type="disulfide bond" evidence="1">
    <location>
        <begin position="408"/>
        <end position="436"/>
    </location>
</feature>
<evidence type="ECO:0000250" key="1"/>
<evidence type="ECO:0000255" key="2"/>
<evidence type="ECO:0000255" key="3">
    <source>
        <dbReference type="PROSITE-ProRule" id="PRU00076"/>
    </source>
</evidence>
<evidence type="ECO:0000255" key="4">
    <source>
        <dbReference type="PROSITE-ProRule" id="PRU00274"/>
    </source>
</evidence>
<evidence type="ECO:0000255" key="5">
    <source>
        <dbReference type="PROSITE-ProRule" id="PRU00463"/>
    </source>
</evidence>
<evidence type="ECO:0000269" key="6">
    <source>
    </source>
</evidence>
<evidence type="ECO:0000305" key="7"/>
<sequence>MAPQLLLCLIQTFLWSLPEAESNVFLKSNVANRFLQRTKRANSGFEEIYPANFERECVEERCSKEEAREVFEDDEKTEAFWTVYVDGDQCLSNPCHYGGTCKDGIGSYTCTCLAGYEGKNCEHDLLKSCRVDNGNCWHFCKPVQNDTQCSCAEGYRLGDNGFSCIAEGEFSCGRNIKSRNKREASLPDFQTDFSDDYDAIDENNLIETVQSQSATLLKKSDNPNPDIRIVNGLDCKLGECPWQAVLIDEKGTAFGGGTILSPYFVLTAAHCINKTKSIAVVVGQVDISRKETRRLLSVDKVYTHPKYVHVTNDYDIAIIQLKTPIQFSENVVPACLPTADFANHVLMKQDFGIVSGFGRIEEKGPTSNILKVVMVPYVDRHTCILSTKIPITRNMFCAGYGNQPEDACEGDSGGPHITAYKDTHFLTGIVSWGEGCGRDGKYGIYTKVSNFLPWIKTIMRRKQPSTESSTGRL</sequence>
<name>FAXD1_DEMVE</name>
<reference key="1">
    <citation type="journal article" date="2007" name="J. Proteome Res.">
        <title>Diversity of toxic components from the venom of the evolutionarily distinct black whip snake, Demansia vestigiata.</title>
        <authorList>
            <person name="St Pierre L."/>
            <person name="Birrell G.W."/>
            <person name="Earl S.T.H."/>
            <person name="Wallis T.P."/>
            <person name="Gorman J.J."/>
            <person name="de Jersey J."/>
            <person name="Masci P.P."/>
            <person name="Lavin M.F."/>
        </authorList>
    </citation>
    <scope>NUCLEOTIDE SEQUENCE [MRNA]</scope>
    <scope>PROTEIN SEQUENCE OF 134-140; 163-174; 348-359; 372-380 AND 427-434</scope>
    <scope>SUBCELLULAR LOCATION</scope>
    <scope>TISSUE SPECIFICITY</scope>
    <scope>IDENTIFICATION BY MASS SPECTROMETRY</scope>
    <source>
        <tissue>Venom</tissue>
        <tissue>Venom gland</tissue>
    </source>
</reference>
<reference key="2">
    <citation type="journal article" date="2001" name="Thromb. Haemost.">
        <title>Classification and nomenclature of prothrombin activators isolated from snake venoms.</title>
        <authorList>
            <person name="Manjunatha Kini R."/>
            <person name="Morita T."/>
            <person name="Rosing J."/>
        </authorList>
    </citation>
    <scope>NOMENCLATURE</scope>
</reference>
<organism>
    <name type="scientific">Demansia vestigiata</name>
    <name type="common">Lesser black whip snake</name>
    <name type="synonym">Demansia atra</name>
    <dbReference type="NCBI Taxonomy" id="412038"/>
    <lineage>
        <taxon>Eukaryota</taxon>
        <taxon>Metazoa</taxon>
        <taxon>Chordata</taxon>
        <taxon>Craniata</taxon>
        <taxon>Vertebrata</taxon>
        <taxon>Euteleostomi</taxon>
        <taxon>Lepidosauria</taxon>
        <taxon>Squamata</taxon>
        <taxon>Bifurcata</taxon>
        <taxon>Unidentata</taxon>
        <taxon>Episquamata</taxon>
        <taxon>Toxicofera</taxon>
        <taxon>Serpentes</taxon>
        <taxon>Colubroidea</taxon>
        <taxon>Elapidae</taxon>
        <taxon>Notechinae</taxon>
        <taxon>Demansia</taxon>
    </lineage>
</organism>
<accession>A6MFK7</accession>
<dbReference type="EC" id="3.4.21.6"/>
<dbReference type="EMBL" id="DQ917518">
    <property type="protein sequence ID" value="ABK63547.1"/>
    <property type="molecule type" value="mRNA"/>
</dbReference>
<dbReference type="SMR" id="A6MFK7"/>
<dbReference type="MEROPS" id="S01.396"/>
<dbReference type="GO" id="GO:0005576">
    <property type="term" value="C:extracellular region"/>
    <property type="evidence" value="ECO:0000250"/>
    <property type="project" value="UniProtKB"/>
</dbReference>
<dbReference type="GO" id="GO:0005615">
    <property type="term" value="C:extracellular space"/>
    <property type="evidence" value="ECO:0007669"/>
    <property type="project" value="TreeGrafter"/>
</dbReference>
<dbReference type="GO" id="GO:0005509">
    <property type="term" value="F:calcium ion binding"/>
    <property type="evidence" value="ECO:0007669"/>
    <property type="project" value="InterPro"/>
</dbReference>
<dbReference type="GO" id="GO:0016504">
    <property type="term" value="F:peptidase activator activity"/>
    <property type="evidence" value="ECO:0007669"/>
    <property type="project" value="UniProtKB-KW"/>
</dbReference>
<dbReference type="GO" id="GO:0004252">
    <property type="term" value="F:serine-type endopeptidase activity"/>
    <property type="evidence" value="ECO:0000250"/>
    <property type="project" value="UniProtKB"/>
</dbReference>
<dbReference type="GO" id="GO:0090729">
    <property type="term" value="F:toxin activity"/>
    <property type="evidence" value="ECO:0007669"/>
    <property type="project" value="UniProtKB-KW"/>
</dbReference>
<dbReference type="GO" id="GO:0007596">
    <property type="term" value="P:blood coagulation"/>
    <property type="evidence" value="ECO:0007669"/>
    <property type="project" value="InterPro"/>
</dbReference>
<dbReference type="GO" id="GO:0035807">
    <property type="term" value="P:induction of blood coagulation in another organism"/>
    <property type="evidence" value="ECO:0007669"/>
    <property type="project" value="UniProtKB-ARBA"/>
</dbReference>
<dbReference type="GO" id="GO:0006508">
    <property type="term" value="P:proteolysis"/>
    <property type="evidence" value="ECO:0007669"/>
    <property type="project" value="UniProtKB-KW"/>
</dbReference>
<dbReference type="GO" id="GO:0044469">
    <property type="term" value="P:venom-mediated blood coagulation"/>
    <property type="evidence" value="ECO:0000250"/>
    <property type="project" value="UniProtKB"/>
</dbReference>
<dbReference type="CDD" id="cd00054">
    <property type="entry name" value="EGF_CA"/>
    <property type="match status" value="1"/>
</dbReference>
<dbReference type="CDD" id="cd00190">
    <property type="entry name" value="Tryp_SPc"/>
    <property type="match status" value="1"/>
</dbReference>
<dbReference type="FunFam" id="2.10.25.10:FF:000513">
    <property type="entry name" value="Coagulation factor VII"/>
    <property type="match status" value="1"/>
</dbReference>
<dbReference type="FunFam" id="2.40.10.10:FF:000013">
    <property type="entry name" value="Coagulation factor X"/>
    <property type="match status" value="1"/>
</dbReference>
<dbReference type="FunFam" id="2.10.25.10:FF:000162">
    <property type="entry name" value="Coagulation factor X (Predicted)"/>
    <property type="match status" value="1"/>
</dbReference>
<dbReference type="FunFam" id="4.10.740.10:FF:000001">
    <property type="entry name" value="vitamin K-dependent protein S"/>
    <property type="match status" value="1"/>
</dbReference>
<dbReference type="Gene3D" id="4.10.740.10">
    <property type="entry name" value="Coagulation Factor IX"/>
    <property type="match status" value="1"/>
</dbReference>
<dbReference type="Gene3D" id="2.10.25.10">
    <property type="entry name" value="Laminin"/>
    <property type="match status" value="2"/>
</dbReference>
<dbReference type="Gene3D" id="2.40.10.10">
    <property type="entry name" value="Trypsin-like serine proteases"/>
    <property type="match status" value="2"/>
</dbReference>
<dbReference type="InterPro" id="IPR017857">
    <property type="entry name" value="Coagulation_fac-like_Gla_dom"/>
</dbReference>
<dbReference type="InterPro" id="IPR001881">
    <property type="entry name" value="EGF-like_Ca-bd_dom"/>
</dbReference>
<dbReference type="InterPro" id="IPR000742">
    <property type="entry name" value="EGF-like_dom"/>
</dbReference>
<dbReference type="InterPro" id="IPR000152">
    <property type="entry name" value="EGF-type_Asp/Asn_hydroxyl_site"/>
</dbReference>
<dbReference type="InterPro" id="IPR018097">
    <property type="entry name" value="EGF_Ca-bd_CS"/>
</dbReference>
<dbReference type="InterPro" id="IPR035972">
    <property type="entry name" value="GLA-like_dom_SF"/>
</dbReference>
<dbReference type="InterPro" id="IPR000294">
    <property type="entry name" value="GLA_domain"/>
</dbReference>
<dbReference type="InterPro" id="IPR012224">
    <property type="entry name" value="Pept_S1A_FX"/>
</dbReference>
<dbReference type="InterPro" id="IPR050442">
    <property type="entry name" value="Peptidase_S1_coag_factors"/>
</dbReference>
<dbReference type="InterPro" id="IPR009003">
    <property type="entry name" value="Peptidase_S1_PA"/>
</dbReference>
<dbReference type="InterPro" id="IPR043504">
    <property type="entry name" value="Peptidase_S1_PA_chymotrypsin"/>
</dbReference>
<dbReference type="InterPro" id="IPR001314">
    <property type="entry name" value="Peptidase_S1A"/>
</dbReference>
<dbReference type="InterPro" id="IPR001254">
    <property type="entry name" value="Trypsin_dom"/>
</dbReference>
<dbReference type="InterPro" id="IPR018114">
    <property type="entry name" value="TRYPSIN_HIS"/>
</dbReference>
<dbReference type="InterPro" id="IPR033116">
    <property type="entry name" value="TRYPSIN_SER"/>
</dbReference>
<dbReference type="PANTHER" id="PTHR24278">
    <property type="entry name" value="COAGULATION FACTOR"/>
    <property type="match status" value="1"/>
</dbReference>
<dbReference type="PANTHER" id="PTHR24278:SF28">
    <property type="entry name" value="COAGULATION FACTOR X"/>
    <property type="match status" value="1"/>
</dbReference>
<dbReference type="Pfam" id="PF00008">
    <property type="entry name" value="EGF"/>
    <property type="match status" value="1"/>
</dbReference>
<dbReference type="Pfam" id="PF14670">
    <property type="entry name" value="FXa_inhibition"/>
    <property type="match status" value="1"/>
</dbReference>
<dbReference type="Pfam" id="PF00594">
    <property type="entry name" value="Gla"/>
    <property type="match status" value="1"/>
</dbReference>
<dbReference type="Pfam" id="PF00089">
    <property type="entry name" value="Trypsin"/>
    <property type="match status" value="1"/>
</dbReference>
<dbReference type="PIRSF" id="PIRSF001143">
    <property type="entry name" value="Factor_X"/>
    <property type="match status" value="1"/>
</dbReference>
<dbReference type="PRINTS" id="PR00722">
    <property type="entry name" value="CHYMOTRYPSIN"/>
</dbReference>
<dbReference type="PRINTS" id="PR00010">
    <property type="entry name" value="EGFBLOOD"/>
</dbReference>
<dbReference type="PRINTS" id="PR00001">
    <property type="entry name" value="GLABLOOD"/>
</dbReference>
<dbReference type="SMART" id="SM00181">
    <property type="entry name" value="EGF"/>
    <property type="match status" value="2"/>
</dbReference>
<dbReference type="SMART" id="SM00179">
    <property type="entry name" value="EGF_CA"/>
    <property type="match status" value="1"/>
</dbReference>
<dbReference type="SMART" id="SM00069">
    <property type="entry name" value="GLA"/>
    <property type="match status" value="1"/>
</dbReference>
<dbReference type="SMART" id="SM00020">
    <property type="entry name" value="Tryp_SPc"/>
    <property type="match status" value="1"/>
</dbReference>
<dbReference type="SUPFAM" id="SSF57630">
    <property type="entry name" value="GLA-domain"/>
    <property type="match status" value="1"/>
</dbReference>
<dbReference type="SUPFAM" id="SSF50494">
    <property type="entry name" value="Trypsin-like serine proteases"/>
    <property type="match status" value="1"/>
</dbReference>
<dbReference type="PROSITE" id="PS00010">
    <property type="entry name" value="ASX_HYDROXYL"/>
    <property type="match status" value="1"/>
</dbReference>
<dbReference type="PROSITE" id="PS00022">
    <property type="entry name" value="EGF_1"/>
    <property type="match status" value="1"/>
</dbReference>
<dbReference type="PROSITE" id="PS01186">
    <property type="entry name" value="EGF_2"/>
    <property type="match status" value="2"/>
</dbReference>
<dbReference type="PROSITE" id="PS50026">
    <property type="entry name" value="EGF_3"/>
    <property type="match status" value="1"/>
</dbReference>
<dbReference type="PROSITE" id="PS01187">
    <property type="entry name" value="EGF_CA"/>
    <property type="match status" value="1"/>
</dbReference>
<dbReference type="PROSITE" id="PS00011">
    <property type="entry name" value="GLA_1"/>
    <property type="match status" value="1"/>
</dbReference>
<dbReference type="PROSITE" id="PS50998">
    <property type="entry name" value="GLA_2"/>
    <property type="match status" value="1"/>
</dbReference>
<dbReference type="PROSITE" id="PS50240">
    <property type="entry name" value="TRYPSIN_DOM"/>
    <property type="match status" value="1"/>
</dbReference>
<dbReference type="PROSITE" id="PS00134">
    <property type="entry name" value="TRYPSIN_HIS"/>
    <property type="match status" value="1"/>
</dbReference>
<dbReference type="PROSITE" id="PS00135">
    <property type="entry name" value="TRYPSIN_SER"/>
    <property type="match status" value="1"/>
</dbReference>
<comment type="function">
    <text evidence="1">Snake prothrombin activator that attacks the hemostatic system of prey. This protein is functionally similar to blood coagulation factor Xa (By similarity).</text>
</comment>
<comment type="catalytic activity">
    <reaction>
        <text>Selective cleavage of Arg-|-Thr and then Arg-|-Ile bonds in prothrombin to form thrombin.</text>
        <dbReference type="EC" id="3.4.21.6"/>
    </reaction>
</comment>
<comment type="subunit">
    <text evidence="1">Heterodimer of a light chain and a heavy chain; disulfide-linked.</text>
</comment>
<comment type="subcellular location">
    <subcellularLocation>
        <location evidence="6">Secreted</location>
    </subcellularLocation>
</comment>
<comment type="tissue specificity">
    <text evidence="6">Expressed by the venom gland.</text>
</comment>
<comment type="PTM">
    <text evidence="1">The vitamin K-dependent, enzymatic carboxylation of some glutamate residues allows the modified protein to bind calcium.</text>
</comment>
<comment type="miscellaneous">
    <text>Is classified in the group D of snake venom prothrombin activators, since it requires the mammalian factor Va for maximal activity for the cleavage of prothrombin.</text>
</comment>
<comment type="miscellaneous">
    <text>In contrast to blood coagulation factors that circulate as inactive zymogen in plasma, venom prothrombin activators are always found in the active form in the venom.</text>
</comment>
<comment type="similarity">
    <text evidence="4">Belongs to the peptidase S1 family. Snake venom subfamily.</text>
</comment>
<comment type="caution">
    <text evidence="7">Lacks the Cys residue in position 255 that is replaced by a Gly residue, resulting of a loss a disulfide bond. This may contribute to a probable lower procoagulant activity.</text>
</comment>
<keyword id="KW-1204">Blood coagulation cascade activating toxin</keyword>
<keyword id="KW-0106">Calcium</keyword>
<keyword id="KW-0165">Cleavage on pair of basic residues</keyword>
<keyword id="KW-0903">Direct protein sequencing</keyword>
<keyword id="KW-1015">Disulfide bond</keyword>
<keyword id="KW-0245">EGF-like domain</keyword>
<keyword id="KW-0301">Gamma-carboxyglutamic acid</keyword>
<keyword id="KW-0325">Glycoprotein</keyword>
<keyword id="KW-1199">Hemostasis impairing toxin</keyword>
<keyword id="KW-0378">Hydrolase</keyword>
<keyword id="KW-0645">Protease</keyword>
<keyword id="KW-0655">Prothrombin activator</keyword>
<keyword id="KW-0677">Repeat</keyword>
<keyword id="KW-0964">Secreted</keyword>
<keyword id="KW-0720">Serine protease</keyword>
<keyword id="KW-0732">Signal</keyword>
<keyword id="KW-0800">Toxin</keyword>
<protein>
    <recommendedName>
        <fullName>Venom prothrombin activator vestarin-D1</fullName>
        <shortName>vPA</shortName>
        <ecNumber>3.4.21.6</ecNumber>
    </recommendedName>
    <alternativeName>
        <fullName>Venom coagulation factor Xa-like protease</fullName>
    </alternativeName>
    <component>
        <recommendedName>
            <fullName>Vestarin-D1 light chain</fullName>
        </recommendedName>
    </component>
    <component>
        <recommendedName>
            <fullName>Vestarin-D1 heavy chain</fullName>
        </recommendedName>
    </component>
</protein>